<evidence type="ECO:0000250" key="1"/>
<evidence type="ECO:0000255" key="2">
    <source>
        <dbReference type="PROSITE-ProRule" id="PRU00156"/>
    </source>
</evidence>
<evidence type="ECO:0000305" key="3"/>
<organism>
    <name type="scientific">Allium cepa</name>
    <name type="common">Onion</name>
    <dbReference type="NCBI Taxonomy" id="4679"/>
    <lineage>
        <taxon>Eukaryota</taxon>
        <taxon>Viridiplantae</taxon>
        <taxon>Streptophyta</taxon>
        <taxon>Embryophyta</taxon>
        <taxon>Tracheophyta</taxon>
        <taxon>Spermatophyta</taxon>
        <taxon>Magnoliopsida</taxon>
        <taxon>Liliopsida</taxon>
        <taxon>Asparagales</taxon>
        <taxon>Amaryllidaceae</taxon>
        <taxon>Allioideae</taxon>
        <taxon>Allieae</taxon>
        <taxon>Allium</taxon>
    </lineage>
</organism>
<comment type="function">
    <text>PPIases accelerate the folding of proteins. It catalyzes the cis-trans isomerization of proline imidic peptide bonds in oligopeptides.</text>
</comment>
<comment type="catalytic activity">
    <reaction>
        <text>[protein]-peptidylproline (omega=180) = [protein]-peptidylproline (omega=0)</text>
        <dbReference type="Rhea" id="RHEA:16237"/>
        <dbReference type="Rhea" id="RHEA-COMP:10747"/>
        <dbReference type="Rhea" id="RHEA-COMP:10748"/>
        <dbReference type="ChEBI" id="CHEBI:83833"/>
        <dbReference type="ChEBI" id="CHEBI:83834"/>
        <dbReference type="EC" id="5.2.1.8"/>
    </reaction>
</comment>
<comment type="activity regulation">
    <text>Binds cyclosporin A (CsA). CsA mediates some of its effects via an inhibitory action on PPIase.</text>
</comment>
<comment type="subcellular location">
    <subcellularLocation>
        <location evidence="1">Cytoplasm</location>
    </subcellularLocation>
</comment>
<comment type="similarity">
    <text evidence="3">Belongs to the cyclophilin-type PPIase family.</text>
</comment>
<keyword id="KW-0963">Cytoplasm</keyword>
<keyword id="KW-0413">Isomerase</keyword>
<keyword id="KW-0697">Rotamase</keyword>
<dbReference type="EC" id="5.2.1.8"/>
<dbReference type="EMBL" id="L13365">
    <property type="protein sequence ID" value="AAA32642.1"/>
    <property type="molecule type" value="mRNA"/>
</dbReference>
<dbReference type="SMR" id="P34887"/>
<dbReference type="GO" id="GO:0005737">
    <property type="term" value="C:cytoplasm"/>
    <property type="evidence" value="ECO:0007669"/>
    <property type="project" value="UniProtKB-SubCell"/>
</dbReference>
<dbReference type="GO" id="GO:0016018">
    <property type="term" value="F:cyclosporin A binding"/>
    <property type="evidence" value="ECO:0007669"/>
    <property type="project" value="TreeGrafter"/>
</dbReference>
<dbReference type="GO" id="GO:0003755">
    <property type="term" value="F:peptidyl-prolyl cis-trans isomerase activity"/>
    <property type="evidence" value="ECO:0007669"/>
    <property type="project" value="UniProtKB-KW"/>
</dbReference>
<dbReference type="GO" id="GO:0006457">
    <property type="term" value="P:protein folding"/>
    <property type="evidence" value="ECO:0007669"/>
    <property type="project" value="InterPro"/>
</dbReference>
<dbReference type="CDD" id="cd01926">
    <property type="entry name" value="cyclophilin_ABH_like"/>
    <property type="match status" value="1"/>
</dbReference>
<dbReference type="FunFam" id="2.40.100.10:FF:000002">
    <property type="entry name" value="Peptidyl-prolyl cis-trans isomerase"/>
    <property type="match status" value="1"/>
</dbReference>
<dbReference type="Gene3D" id="2.40.100.10">
    <property type="entry name" value="Cyclophilin-like"/>
    <property type="match status" value="1"/>
</dbReference>
<dbReference type="InterPro" id="IPR029000">
    <property type="entry name" value="Cyclophilin-like_dom_sf"/>
</dbReference>
<dbReference type="InterPro" id="IPR024936">
    <property type="entry name" value="Cyclophilin-type_PPIase"/>
</dbReference>
<dbReference type="InterPro" id="IPR020892">
    <property type="entry name" value="Cyclophilin-type_PPIase_CS"/>
</dbReference>
<dbReference type="InterPro" id="IPR002130">
    <property type="entry name" value="Cyclophilin-type_PPIase_dom"/>
</dbReference>
<dbReference type="PANTHER" id="PTHR11071">
    <property type="entry name" value="PEPTIDYL-PROLYL CIS-TRANS ISOMERASE"/>
    <property type="match status" value="1"/>
</dbReference>
<dbReference type="PANTHER" id="PTHR11071:SF561">
    <property type="entry name" value="PEPTIDYL-PROLYL CIS-TRANS ISOMERASE D-RELATED"/>
    <property type="match status" value="1"/>
</dbReference>
<dbReference type="Pfam" id="PF00160">
    <property type="entry name" value="Pro_isomerase"/>
    <property type="match status" value="1"/>
</dbReference>
<dbReference type="PIRSF" id="PIRSF001467">
    <property type="entry name" value="Peptidylpro_ismrse"/>
    <property type="match status" value="1"/>
</dbReference>
<dbReference type="PRINTS" id="PR00153">
    <property type="entry name" value="CSAPPISMRASE"/>
</dbReference>
<dbReference type="SUPFAM" id="SSF50891">
    <property type="entry name" value="Cyclophilin-like"/>
    <property type="match status" value="1"/>
</dbReference>
<dbReference type="PROSITE" id="PS00170">
    <property type="entry name" value="CSA_PPIASE_1"/>
    <property type="match status" value="1"/>
</dbReference>
<dbReference type="PROSITE" id="PS50072">
    <property type="entry name" value="CSA_PPIASE_2"/>
    <property type="match status" value="1"/>
</dbReference>
<name>CYPH_ALLCE</name>
<reference key="1">
    <citation type="submission" date="1993-05" db="EMBL/GenBank/DDBJ databases">
        <authorList>
            <person name="Clark S.A."/>
        </authorList>
    </citation>
    <scope>NUCLEOTIDE SEQUENCE [MRNA]</scope>
</reference>
<accession>P34887</accession>
<feature type="chain" id="PRO_0000064140" description="Peptidyl-prolyl cis-trans isomerase">
    <location>
        <begin position="1"/>
        <end position="150"/>
    </location>
</feature>
<feature type="domain" description="PPIase cyclophilin-type" evidence="2">
    <location>
        <begin position="1"/>
        <end position="148"/>
    </location>
</feature>
<sequence length="150" mass="16033">MELFQDVVPQTAENFRALCTGEKGMGDRKPLHYKGSSFHRVIPGFMCQGGDFTAGNGTGGESIYGAKFKDENFIKKHTGPGVLSMANAGPGTNGSQFFICTEKTAWLDGKHVVFGQVVEGMDVVRAIEKVGSQSGQTKKPVKIADCGQLS</sequence>
<protein>
    <recommendedName>
        <fullName>Peptidyl-prolyl cis-trans isomerase</fullName>
        <shortName>PPIase</shortName>
        <ecNumber>5.2.1.8</ecNumber>
    </recommendedName>
    <alternativeName>
        <fullName>Cyclophilin</fullName>
    </alternativeName>
    <alternativeName>
        <fullName>Cyclosporin A-binding protein</fullName>
    </alternativeName>
    <alternativeName>
        <fullName>Rotamase</fullName>
    </alternativeName>
</protein>
<proteinExistence type="evidence at transcript level"/>
<gene>
    <name type="primary">CYP</name>
</gene>